<organism>
    <name type="scientific">Schizosaccharomyces pombe (strain 972 / ATCC 24843)</name>
    <name type="common">Fission yeast</name>
    <dbReference type="NCBI Taxonomy" id="284812"/>
    <lineage>
        <taxon>Eukaryota</taxon>
        <taxon>Fungi</taxon>
        <taxon>Dikarya</taxon>
        <taxon>Ascomycota</taxon>
        <taxon>Taphrinomycotina</taxon>
        <taxon>Schizosaccharomycetes</taxon>
        <taxon>Schizosaccharomycetales</taxon>
        <taxon>Schizosaccharomycetaceae</taxon>
        <taxon>Schizosaccharomyces</taxon>
    </lineage>
</organism>
<proteinExistence type="predicted"/>
<accession>A6X982</accession>
<reference key="1">
    <citation type="journal article" date="2002" name="Nature">
        <title>The genome sequence of Schizosaccharomyces pombe.</title>
        <authorList>
            <person name="Wood V."/>
            <person name="Gwilliam R."/>
            <person name="Rajandream M.A."/>
            <person name="Lyne M.H."/>
            <person name="Lyne R."/>
            <person name="Stewart A."/>
            <person name="Sgouros J.G."/>
            <person name="Peat N."/>
            <person name="Hayles J."/>
            <person name="Baker S.G."/>
            <person name="Basham D."/>
            <person name="Bowman S."/>
            <person name="Brooks K."/>
            <person name="Brown D."/>
            <person name="Brown S."/>
            <person name="Chillingworth T."/>
            <person name="Churcher C.M."/>
            <person name="Collins M."/>
            <person name="Connor R."/>
            <person name="Cronin A."/>
            <person name="Davis P."/>
            <person name="Feltwell T."/>
            <person name="Fraser A."/>
            <person name="Gentles S."/>
            <person name="Goble A."/>
            <person name="Hamlin N."/>
            <person name="Harris D.E."/>
            <person name="Hidalgo J."/>
            <person name="Hodgson G."/>
            <person name="Holroyd S."/>
            <person name="Hornsby T."/>
            <person name="Howarth S."/>
            <person name="Huckle E.J."/>
            <person name="Hunt S."/>
            <person name="Jagels K."/>
            <person name="James K.D."/>
            <person name="Jones L."/>
            <person name="Jones M."/>
            <person name="Leather S."/>
            <person name="McDonald S."/>
            <person name="McLean J."/>
            <person name="Mooney P."/>
            <person name="Moule S."/>
            <person name="Mungall K.L."/>
            <person name="Murphy L.D."/>
            <person name="Niblett D."/>
            <person name="Odell C."/>
            <person name="Oliver K."/>
            <person name="O'Neil S."/>
            <person name="Pearson D."/>
            <person name="Quail M.A."/>
            <person name="Rabbinowitsch E."/>
            <person name="Rutherford K.M."/>
            <person name="Rutter S."/>
            <person name="Saunders D."/>
            <person name="Seeger K."/>
            <person name="Sharp S."/>
            <person name="Skelton J."/>
            <person name="Simmonds M.N."/>
            <person name="Squares R."/>
            <person name="Squares S."/>
            <person name="Stevens K."/>
            <person name="Taylor K."/>
            <person name="Taylor R.G."/>
            <person name="Tivey A."/>
            <person name="Walsh S.V."/>
            <person name="Warren T."/>
            <person name="Whitehead S."/>
            <person name="Woodward J.R."/>
            <person name="Volckaert G."/>
            <person name="Aert R."/>
            <person name="Robben J."/>
            <person name="Grymonprez B."/>
            <person name="Weltjens I."/>
            <person name="Vanstreels E."/>
            <person name="Rieger M."/>
            <person name="Schaefer M."/>
            <person name="Mueller-Auer S."/>
            <person name="Gabel C."/>
            <person name="Fuchs M."/>
            <person name="Duesterhoeft A."/>
            <person name="Fritzc C."/>
            <person name="Holzer E."/>
            <person name="Moestl D."/>
            <person name="Hilbert H."/>
            <person name="Borzym K."/>
            <person name="Langer I."/>
            <person name="Beck A."/>
            <person name="Lehrach H."/>
            <person name="Reinhardt R."/>
            <person name="Pohl T.M."/>
            <person name="Eger P."/>
            <person name="Zimmermann W."/>
            <person name="Wedler H."/>
            <person name="Wambutt R."/>
            <person name="Purnelle B."/>
            <person name="Goffeau A."/>
            <person name="Cadieu E."/>
            <person name="Dreano S."/>
            <person name="Gloux S."/>
            <person name="Lelaure V."/>
            <person name="Mottier S."/>
            <person name="Galibert F."/>
            <person name="Aves S.J."/>
            <person name="Xiang Z."/>
            <person name="Hunt C."/>
            <person name="Moore K."/>
            <person name="Hurst S.M."/>
            <person name="Lucas M."/>
            <person name="Rochet M."/>
            <person name="Gaillardin C."/>
            <person name="Tallada V.A."/>
            <person name="Garzon A."/>
            <person name="Thode G."/>
            <person name="Daga R.R."/>
            <person name="Cruzado L."/>
            <person name="Jimenez J."/>
            <person name="Sanchez M."/>
            <person name="del Rey F."/>
            <person name="Benito J."/>
            <person name="Dominguez A."/>
            <person name="Revuelta J.L."/>
            <person name="Moreno S."/>
            <person name="Armstrong J."/>
            <person name="Forsburg S.L."/>
            <person name="Cerutti L."/>
            <person name="Lowe T."/>
            <person name="McCombie W.R."/>
            <person name="Paulsen I."/>
            <person name="Potashkin J."/>
            <person name="Shpakovski G.V."/>
            <person name="Ussery D."/>
            <person name="Barrell B.G."/>
            <person name="Nurse P."/>
        </authorList>
    </citation>
    <scope>NUCLEOTIDE SEQUENCE [LARGE SCALE GENOMIC DNA]</scope>
    <source>
        <strain>972 / ATCC 24843</strain>
    </source>
</reference>
<reference key="2">
    <citation type="journal article" date="2006" name="Nat. Biotechnol.">
        <title>ORFeome cloning and global analysis of protein localization in the fission yeast Schizosaccharomyces pombe.</title>
        <authorList>
            <person name="Matsuyama A."/>
            <person name="Arai R."/>
            <person name="Yashiroda Y."/>
            <person name="Shirai A."/>
            <person name="Kamata A."/>
            <person name="Sekido S."/>
            <person name="Kobayashi Y."/>
            <person name="Hashimoto A."/>
            <person name="Hamamoto M."/>
            <person name="Hiraoka Y."/>
            <person name="Horinouchi S."/>
            <person name="Yoshida M."/>
        </authorList>
    </citation>
    <scope>SUBCELLULAR LOCATION [LARGE SCALE ANALYSIS]</scope>
</reference>
<keyword id="KW-0963">Cytoplasm</keyword>
<keyword id="KW-0539">Nucleus</keyword>
<keyword id="KW-1185">Reference proteome</keyword>
<sequence>MRYPNLLFLALPISEHYIEESLKYFKLTSNDPMILSGFRGPRVSHLTIGMIPVKNDEDVLKCMDFLYNKEDEIRKSYGEKKITIDLKGTSFFGKSPQEAKVLYATPVDKHNEWLKVIFTEHNLFTKDARPLTLHCTLLNSRYIKYQGRRIRFFNSEPFMEKYGQFLWAHNIELDKLSIMKTGAVGEPGNMYYEELASIPLLVND</sequence>
<evidence type="ECO:0000269" key="1">
    <source>
    </source>
</evidence>
<gene>
    <name type="ORF">SPBC15D4.13c</name>
</gene>
<dbReference type="EMBL" id="CU329671">
    <property type="protein sequence ID" value="CAO77666.2"/>
    <property type="molecule type" value="Genomic_DNA"/>
</dbReference>
<dbReference type="RefSeq" id="XP_001713141.2">
    <property type="nucleotide sequence ID" value="XM_001713089.2"/>
</dbReference>
<dbReference type="SMR" id="A6X982"/>
<dbReference type="FunCoup" id="A6X982">
    <property type="interactions" value="279"/>
</dbReference>
<dbReference type="STRING" id="284812.A6X982"/>
<dbReference type="iPTMnet" id="A6X982"/>
<dbReference type="PaxDb" id="4896-SPBC15D4.13c.1"/>
<dbReference type="EnsemblFungi" id="SPBC15D4.13c.1">
    <property type="protein sequence ID" value="SPBC15D4.13c.1:pep"/>
    <property type="gene ID" value="SPBC15D4.13c"/>
</dbReference>
<dbReference type="PomBase" id="SPBC15D4.13c"/>
<dbReference type="VEuPathDB" id="FungiDB:SPBC15D4.13c"/>
<dbReference type="eggNOG" id="KOG2814">
    <property type="taxonomic scope" value="Eukaryota"/>
</dbReference>
<dbReference type="HOGENOM" id="CLU_1343951_0_0_1"/>
<dbReference type="InParanoid" id="A6X982"/>
<dbReference type="OMA" id="HLTIGMI"/>
<dbReference type="PhylomeDB" id="A6X982"/>
<dbReference type="PRO" id="PR:A6X982"/>
<dbReference type="Proteomes" id="UP000002485">
    <property type="component" value="Chromosome II"/>
</dbReference>
<dbReference type="GO" id="GO:0005737">
    <property type="term" value="C:cytoplasm"/>
    <property type="evidence" value="ECO:0007005"/>
    <property type="project" value="PomBase"/>
</dbReference>
<dbReference type="GO" id="GO:0005829">
    <property type="term" value="C:cytosol"/>
    <property type="evidence" value="ECO:0007005"/>
    <property type="project" value="PomBase"/>
</dbReference>
<dbReference type="GO" id="GO:0005634">
    <property type="term" value="C:nucleus"/>
    <property type="evidence" value="ECO:0007005"/>
    <property type="project" value="PomBase"/>
</dbReference>
<dbReference type="GO" id="GO:0006307">
    <property type="term" value="P:DNA alkylation repair"/>
    <property type="evidence" value="ECO:0007669"/>
    <property type="project" value="InterPro"/>
</dbReference>
<dbReference type="GO" id="GO:0032790">
    <property type="term" value="P:ribosome disassembly"/>
    <property type="evidence" value="ECO:0000304"/>
    <property type="project" value="PomBase"/>
</dbReference>
<dbReference type="Gene3D" id="3.90.1140.10">
    <property type="entry name" value="Cyclic phosphodiesterase"/>
    <property type="match status" value="1"/>
</dbReference>
<dbReference type="InterPro" id="IPR019510">
    <property type="entry name" value="AKAP7-like_phosphoesterase"/>
</dbReference>
<dbReference type="InterPro" id="IPR009210">
    <property type="entry name" value="ASCC1"/>
</dbReference>
<dbReference type="PANTHER" id="PTHR13360">
    <property type="entry name" value="ACTIVATING SIGNAL COINTEGRATOR 1 COMPLEX SUBUNIT 1"/>
    <property type="match status" value="1"/>
</dbReference>
<dbReference type="PANTHER" id="PTHR13360:SF1">
    <property type="entry name" value="ACTIVATING SIGNAL COINTEGRATOR 1 COMPLEX SUBUNIT 1"/>
    <property type="match status" value="1"/>
</dbReference>
<dbReference type="Pfam" id="PF10469">
    <property type="entry name" value="AKAP7_NLS"/>
    <property type="match status" value="1"/>
</dbReference>
<dbReference type="PIRSF" id="PIRSF027019">
    <property type="entry name" value="Euk_LigT"/>
    <property type="match status" value="1"/>
</dbReference>
<name>YOGD_SCHPO</name>
<protein>
    <recommendedName>
        <fullName>Uncharacterized protein C15D4.13c</fullName>
    </recommendedName>
</protein>
<comment type="subcellular location">
    <subcellularLocation>
        <location evidence="1">Cytoplasm</location>
    </subcellularLocation>
    <subcellularLocation>
        <location evidence="1">Nucleus</location>
    </subcellularLocation>
</comment>
<feature type="chain" id="PRO_0000304127" description="Uncharacterized protein C15D4.13c">
    <location>
        <begin position="1"/>
        <end position="204"/>
    </location>
</feature>